<protein>
    <recommendedName>
        <fullName>Conidium-specific protein</fullName>
    </recommendedName>
</protein>
<sequence length="151" mass="15820">MAKPHCSSRSGLLALPRGGSGQPGYGTQSSSNVVGDIDVRASTHKLNRKDNSADKGDTLRPEFSGDPDSEVENNKFAFSPGQLDKLLNPKNFGAFGAFGGLRGLENGLRTNVQSGLSMDETVLDGMVNFNEAVSRTFVPAPKSASPAPLAP</sequence>
<gene>
    <name type="primary">SpoC1-C1D</name>
    <name type="ORF">AN5086</name>
</gene>
<organism>
    <name type="scientific">Emericella nidulans (strain FGSC A4 / ATCC 38163 / CBS 112.46 / NRRL 194 / M139)</name>
    <name type="common">Aspergillus nidulans</name>
    <dbReference type="NCBI Taxonomy" id="227321"/>
    <lineage>
        <taxon>Eukaryota</taxon>
        <taxon>Fungi</taxon>
        <taxon>Dikarya</taxon>
        <taxon>Ascomycota</taxon>
        <taxon>Pezizomycotina</taxon>
        <taxon>Eurotiomycetes</taxon>
        <taxon>Eurotiomycetidae</taxon>
        <taxon>Eurotiales</taxon>
        <taxon>Aspergillaceae</taxon>
        <taxon>Aspergillus</taxon>
        <taxon>Aspergillus subgen. Nidulantes</taxon>
    </lineage>
</organism>
<name>SPC1D_EMENI</name>
<reference key="1">
    <citation type="journal article" date="1990" name="Nucleic Acids Res.">
        <title>Nucleotide and amino acid sequences of the conidium-specific SpoC1-C1D gene from Aspergillus nidulans.</title>
        <authorList>
            <person name="Edwards A.R."/>
            <person name="Miller K.Y."/>
            <person name="Miller B.L."/>
        </authorList>
    </citation>
    <scope>NUCLEOTIDE SEQUENCE [GENOMIC DNA]</scope>
    <source>
        <strain>FGSC A4 / ATCC 38163 / CBS 112.46 / NRRL 194 / M139</strain>
    </source>
</reference>
<reference key="2">
    <citation type="journal article" date="2005" name="Nature">
        <title>Sequencing of Aspergillus nidulans and comparative analysis with A. fumigatus and A. oryzae.</title>
        <authorList>
            <person name="Galagan J.E."/>
            <person name="Calvo S.E."/>
            <person name="Cuomo C."/>
            <person name="Ma L.-J."/>
            <person name="Wortman J.R."/>
            <person name="Batzoglou S."/>
            <person name="Lee S.-I."/>
            <person name="Bastuerkmen M."/>
            <person name="Spevak C.C."/>
            <person name="Clutterbuck J."/>
            <person name="Kapitonov V."/>
            <person name="Jurka J."/>
            <person name="Scazzocchio C."/>
            <person name="Farman M.L."/>
            <person name="Butler J."/>
            <person name="Purcell S."/>
            <person name="Harris S."/>
            <person name="Braus G.H."/>
            <person name="Draht O."/>
            <person name="Busch S."/>
            <person name="D'Enfert C."/>
            <person name="Bouchier C."/>
            <person name="Goldman G.H."/>
            <person name="Bell-Pedersen D."/>
            <person name="Griffiths-Jones S."/>
            <person name="Doonan J.H."/>
            <person name="Yu J."/>
            <person name="Vienken K."/>
            <person name="Pain A."/>
            <person name="Freitag M."/>
            <person name="Selker E.U."/>
            <person name="Archer D.B."/>
            <person name="Penalva M.A."/>
            <person name="Oakley B.R."/>
            <person name="Momany M."/>
            <person name="Tanaka T."/>
            <person name="Kumagai T."/>
            <person name="Asai K."/>
            <person name="Machida M."/>
            <person name="Nierman W.C."/>
            <person name="Denning D.W."/>
            <person name="Caddick M.X."/>
            <person name="Hynes M."/>
            <person name="Paoletti M."/>
            <person name="Fischer R."/>
            <person name="Miller B.L."/>
            <person name="Dyer P.S."/>
            <person name="Sachs M.S."/>
            <person name="Osmani S.A."/>
            <person name="Birren B.W."/>
        </authorList>
    </citation>
    <scope>NUCLEOTIDE SEQUENCE [LARGE SCALE GENOMIC DNA]</scope>
    <source>
        <strain>FGSC A4 / ATCC 38163 / CBS 112.46 / NRRL 194 / M139</strain>
    </source>
</reference>
<reference key="3">
    <citation type="journal article" date="2009" name="Fungal Genet. Biol.">
        <title>The 2008 update of the Aspergillus nidulans genome annotation: a community effort.</title>
        <authorList>
            <person name="Wortman J.R."/>
            <person name="Gilsenan J.M."/>
            <person name="Joardar V."/>
            <person name="Deegan J."/>
            <person name="Clutterbuck J."/>
            <person name="Andersen M.R."/>
            <person name="Archer D."/>
            <person name="Bencina M."/>
            <person name="Braus G."/>
            <person name="Coutinho P."/>
            <person name="von Dohren H."/>
            <person name="Doonan J."/>
            <person name="Driessen A.J."/>
            <person name="Durek P."/>
            <person name="Espeso E."/>
            <person name="Fekete E."/>
            <person name="Flipphi M."/>
            <person name="Estrada C.G."/>
            <person name="Geysens S."/>
            <person name="Goldman G."/>
            <person name="de Groot P.W."/>
            <person name="Hansen K."/>
            <person name="Harris S.D."/>
            <person name="Heinekamp T."/>
            <person name="Helmstaedt K."/>
            <person name="Henrissat B."/>
            <person name="Hofmann G."/>
            <person name="Homan T."/>
            <person name="Horio T."/>
            <person name="Horiuchi H."/>
            <person name="James S."/>
            <person name="Jones M."/>
            <person name="Karaffa L."/>
            <person name="Karanyi Z."/>
            <person name="Kato M."/>
            <person name="Keller N."/>
            <person name="Kelly D.E."/>
            <person name="Kiel J.A."/>
            <person name="Kim J.M."/>
            <person name="van der Klei I.J."/>
            <person name="Klis F.M."/>
            <person name="Kovalchuk A."/>
            <person name="Krasevec N."/>
            <person name="Kubicek C.P."/>
            <person name="Liu B."/>
            <person name="Maccabe A."/>
            <person name="Meyer V."/>
            <person name="Mirabito P."/>
            <person name="Miskei M."/>
            <person name="Mos M."/>
            <person name="Mullins J."/>
            <person name="Nelson D.R."/>
            <person name="Nielsen J."/>
            <person name="Oakley B.R."/>
            <person name="Osmani S.A."/>
            <person name="Pakula T."/>
            <person name="Paszewski A."/>
            <person name="Paulsen I."/>
            <person name="Pilsyk S."/>
            <person name="Pocsi I."/>
            <person name="Punt P.J."/>
            <person name="Ram A.F."/>
            <person name="Ren Q."/>
            <person name="Robellet X."/>
            <person name="Robson G."/>
            <person name="Seiboth B."/>
            <person name="van Solingen P."/>
            <person name="Specht T."/>
            <person name="Sun J."/>
            <person name="Taheri-Talesh N."/>
            <person name="Takeshita N."/>
            <person name="Ussery D."/>
            <person name="vanKuyk P.A."/>
            <person name="Visser H."/>
            <person name="van de Vondervoort P.J."/>
            <person name="de Vries R.P."/>
            <person name="Walton J."/>
            <person name="Xiang X."/>
            <person name="Xiong Y."/>
            <person name="Zeng A.P."/>
            <person name="Brandt B.W."/>
            <person name="Cornell M.J."/>
            <person name="van den Hondel C.A."/>
            <person name="Visser J."/>
            <person name="Oliver S.G."/>
            <person name="Turner G."/>
        </authorList>
    </citation>
    <scope>GENOME REANNOTATION</scope>
    <source>
        <strain>FGSC A4 / ATCC 38163 / CBS 112.46 / NRRL 194 / M139</strain>
    </source>
</reference>
<proteinExistence type="evidence at transcript level"/>
<feature type="chain" id="PRO_0000072107" description="Conidium-specific protein">
    <location>
        <begin position="1"/>
        <end position="151"/>
    </location>
</feature>
<feature type="region of interest" description="Disordered" evidence="1">
    <location>
        <begin position="1"/>
        <end position="72"/>
    </location>
</feature>
<feature type="compositionally biased region" description="Basic and acidic residues" evidence="1">
    <location>
        <begin position="48"/>
        <end position="60"/>
    </location>
</feature>
<feature type="sequence conflict" description="In Ref. 1; CAA38479." evidence="2" ref="1">
    <original>E</original>
    <variation>A</variation>
    <location>
        <position position="70"/>
    </location>
</feature>
<accession>P19815</accession>
<accession>C8V7Y9</accession>
<accession>Q5B2Z4</accession>
<dbReference type="EMBL" id="X54668">
    <property type="protein sequence ID" value="CAA38479.1"/>
    <property type="molecule type" value="Genomic_DNA"/>
</dbReference>
<dbReference type="EMBL" id="AACD01000086">
    <property type="protein sequence ID" value="EAA60181.1"/>
    <property type="molecule type" value="Genomic_DNA"/>
</dbReference>
<dbReference type="EMBL" id="BN001303">
    <property type="protein sequence ID" value="CBF76113.1"/>
    <property type="molecule type" value="Genomic_DNA"/>
</dbReference>
<dbReference type="PIR" id="S12113">
    <property type="entry name" value="S12113"/>
</dbReference>
<dbReference type="RefSeq" id="XP_662690.1">
    <property type="nucleotide sequence ID" value="XM_657598.1"/>
</dbReference>
<dbReference type="STRING" id="227321.P19815"/>
<dbReference type="EnsemblFungi" id="CBF76113">
    <property type="protein sequence ID" value="CBF76113"/>
    <property type="gene ID" value="ANIA_05086"/>
</dbReference>
<dbReference type="KEGG" id="ani:ANIA_05086"/>
<dbReference type="VEuPathDB" id="FungiDB:AN5086"/>
<dbReference type="HOGENOM" id="CLU_1731444_0_0_1"/>
<dbReference type="InParanoid" id="P19815"/>
<dbReference type="OrthoDB" id="4526328at2759"/>
<dbReference type="Proteomes" id="UP000000560">
    <property type="component" value="Chromosome III"/>
</dbReference>
<dbReference type="GO" id="GO:0048315">
    <property type="term" value="P:conidium formation"/>
    <property type="evidence" value="ECO:0007669"/>
    <property type="project" value="UniProtKB-KW"/>
</dbReference>
<dbReference type="GO" id="GO:0030435">
    <property type="term" value="P:sporulation resulting in formation of a cellular spore"/>
    <property type="evidence" value="ECO:0007669"/>
    <property type="project" value="UniProtKB-KW"/>
</dbReference>
<comment type="developmental stage">
    <text>Most highly regulated expression during conidiation.</text>
</comment>
<keyword id="KW-0183">Conidiation</keyword>
<keyword id="KW-1185">Reference proteome</keyword>
<keyword id="KW-0749">Sporulation</keyword>
<evidence type="ECO:0000256" key="1">
    <source>
        <dbReference type="SAM" id="MobiDB-lite"/>
    </source>
</evidence>
<evidence type="ECO:0000305" key="2"/>